<accession>B5XL04</accession>
<gene>
    <name evidence="1" type="primary">engB</name>
    <name type="ordered locus">Spy49_0701</name>
</gene>
<reference key="1">
    <citation type="journal article" date="2008" name="J. Bacteriol.">
        <title>Genome sequence of a nephritogenic and highly transformable M49 strain of Streptococcus pyogenes.</title>
        <authorList>
            <person name="McShan W.M."/>
            <person name="Ferretti J.J."/>
            <person name="Karasawa T."/>
            <person name="Suvorov A.N."/>
            <person name="Lin S."/>
            <person name="Qin B."/>
            <person name="Jia H."/>
            <person name="Kenton S."/>
            <person name="Najar F."/>
            <person name="Wu H."/>
            <person name="Scott J."/>
            <person name="Roe B.A."/>
            <person name="Savic D.J."/>
        </authorList>
    </citation>
    <scope>NUCLEOTIDE SEQUENCE [LARGE SCALE GENOMIC DNA]</scope>
    <source>
        <strain>NZ131</strain>
    </source>
</reference>
<dbReference type="EMBL" id="CP000829">
    <property type="protein sequence ID" value="ACI61016.1"/>
    <property type="molecule type" value="Genomic_DNA"/>
</dbReference>
<dbReference type="SMR" id="B5XL04"/>
<dbReference type="KEGG" id="soz:Spy49_0701"/>
<dbReference type="HOGENOM" id="CLU_033732_3_0_9"/>
<dbReference type="Proteomes" id="UP000001039">
    <property type="component" value="Chromosome"/>
</dbReference>
<dbReference type="GO" id="GO:0005829">
    <property type="term" value="C:cytosol"/>
    <property type="evidence" value="ECO:0007669"/>
    <property type="project" value="TreeGrafter"/>
</dbReference>
<dbReference type="GO" id="GO:0005525">
    <property type="term" value="F:GTP binding"/>
    <property type="evidence" value="ECO:0007669"/>
    <property type="project" value="UniProtKB-UniRule"/>
</dbReference>
<dbReference type="GO" id="GO:0046872">
    <property type="term" value="F:metal ion binding"/>
    <property type="evidence" value="ECO:0007669"/>
    <property type="project" value="UniProtKB-KW"/>
</dbReference>
<dbReference type="GO" id="GO:0000917">
    <property type="term" value="P:division septum assembly"/>
    <property type="evidence" value="ECO:0007669"/>
    <property type="project" value="UniProtKB-KW"/>
</dbReference>
<dbReference type="CDD" id="cd01876">
    <property type="entry name" value="YihA_EngB"/>
    <property type="match status" value="1"/>
</dbReference>
<dbReference type="FunFam" id="3.40.50.300:FF:000098">
    <property type="entry name" value="Probable GTP-binding protein EngB"/>
    <property type="match status" value="1"/>
</dbReference>
<dbReference type="Gene3D" id="3.40.50.300">
    <property type="entry name" value="P-loop containing nucleotide triphosphate hydrolases"/>
    <property type="match status" value="1"/>
</dbReference>
<dbReference type="HAMAP" id="MF_00321">
    <property type="entry name" value="GTPase_EngB"/>
    <property type="match status" value="1"/>
</dbReference>
<dbReference type="InterPro" id="IPR030393">
    <property type="entry name" value="G_ENGB_dom"/>
</dbReference>
<dbReference type="InterPro" id="IPR006073">
    <property type="entry name" value="GTP-bd"/>
</dbReference>
<dbReference type="InterPro" id="IPR019987">
    <property type="entry name" value="GTP-bd_ribosome_bio_YsxC"/>
</dbReference>
<dbReference type="InterPro" id="IPR027417">
    <property type="entry name" value="P-loop_NTPase"/>
</dbReference>
<dbReference type="InterPro" id="IPR005225">
    <property type="entry name" value="Small_GTP-bd"/>
</dbReference>
<dbReference type="NCBIfam" id="TIGR03598">
    <property type="entry name" value="GTPase_YsxC"/>
    <property type="match status" value="1"/>
</dbReference>
<dbReference type="NCBIfam" id="TIGR00231">
    <property type="entry name" value="small_GTP"/>
    <property type="match status" value="1"/>
</dbReference>
<dbReference type="PANTHER" id="PTHR11649:SF13">
    <property type="entry name" value="ENGB-TYPE G DOMAIN-CONTAINING PROTEIN"/>
    <property type="match status" value="1"/>
</dbReference>
<dbReference type="PANTHER" id="PTHR11649">
    <property type="entry name" value="MSS1/TRME-RELATED GTP-BINDING PROTEIN"/>
    <property type="match status" value="1"/>
</dbReference>
<dbReference type="Pfam" id="PF01926">
    <property type="entry name" value="MMR_HSR1"/>
    <property type="match status" value="1"/>
</dbReference>
<dbReference type="SUPFAM" id="SSF52540">
    <property type="entry name" value="P-loop containing nucleoside triphosphate hydrolases"/>
    <property type="match status" value="1"/>
</dbReference>
<dbReference type="PROSITE" id="PS51706">
    <property type="entry name" value="G_ENGB"/>
    <property type="match status" value="1"/>
</dbReference>
<proteinExistence type="inferred from homology"/>
<organism>
    <name type="scientific">Streptococcus pyogenes serotype M49 (strain NZ131)</name>
    <dbReference type="NCBI Taxonomy" id="471876"/>
    <lineage>
        <taxon>Bacteria</taxon>
        <taxon>Bacillati</taxon>
        <taxon>Bacillota</taxon>
        <taxon>Bacilli</taxon>
        <taxon>Lactobacillales</taxon>
        <taxon>Streptococcaceae</taxon>
        <taxon>Streptococcus</taxon>
    </lineage>
</organism>
<evidence type="ECO:0000255" key="1">
    <source>
        <dbReference type="HAMAP-Rule" id="MF_00321"/>
    </source>
</evidence>
<keyword id="KW-0131">Cell cycle</keyword>
<keyword id="KW-0132">Cell division</keyword>
<keyword id="KW-0342">GTP-binding</keyword>
<keyword id="KW-0460">Magnesium</keyword>
<keyword id="KW-0479">Metal-binding</keyword>
<keyword id="KW-0547">Nucleotide-binding</keyword>
<keyword id="KW-0717">Septation</keyword>
<comment type="function">
    <text evidence="1">Necessary for normal cell division and for the maintenance of normal septation.</text>
</comment>
<comment type="cofactor">
    <cofactor evidence="1">
        <name>Mg(2+)</name>
        <dbReference type="ChEBI" id="CHEBI:18420"/>
    </cofactor>
</comment>
<comment type="similarity">
    <text evidence="1">Belongs to the TRAFAC class TrmE-Era-EngA-EngB-Septin-like GTPase superfamily. EngB GTPase family.</text>
</comment>
<sequence>MAEEQVLNTHNASILLSAANKSHYPQDDLPEIALAGRSNVGKSSFINTILGRKNLARTSSKPGKTQLLNFFNIDDKLRFVDVPGYGYAKVSKSERAKWGKMIEEYLTTRDNLRAVVSLVDLRHAPSKEDIQMYDFLKYYDIPVIVVATKADKIPRGKWNKHESVVKKALNFDKSDTFIVFSSVERIGIDDSWDAILEQV</sequence>
<feature type="chain" id="PRO_1000116009" description="Probable GTP-binding protein EngB">
    <location>
        <begin position="1"/>
        <end position="199"/>
    </location>
</feature>
<feature type="domain" description="EngB-type G" evidence="1">
    <location>
        <begin position="28"/>
        <end position="199"/>
    </location>
</feature>
<feature type="binding site" evidence="1">
    <location>
        <begin position="36"/>
        <end position="43"/>
    </location>
    <ligand>
        <name>GTP</name>
        <dbReference type="ChEBI" id="CHEBI:37565"/>
    </ligand>
</feature>
<feature type="binding site" evidence="1">
    <location>
        <position position="43"/>
    </location>
    <ligand>
        <name>Mg(2+)</name>
        <dbReference type="ChEBI" id="CHEBI:18420"/>
    </ligand>
</feature>
<feature type="binding site" evidence="1">
    <location>
        <begin position="63"/>
        <end position="67"/>
    </location>
    <ligand>
        <name>GTP</name>
        <dbReference type="ChEBI" id="CHEBI:37565"/>
    </ligand>
</feature>
<feature type="binding site" evidence="1">
    <location>
        <position position="65"/>
    </location>
    <ligand>
        <name>Mg(2+)</name>
        <dbReference type="ChEBI" id="CHEBI:18420"/>
    </ligand>
</feature>
<feature type="binding site" evidence="1">
    <location>
        <begin position="81"/>
        <end position="84"/>
    </location>
    <ligand>
        <name>GTP</name>
        <dbReference type="ChEBI" id="CHEBI:37565"/>
    </ligand>
</feature>
<feature type="binding site" evidence="1">
    <location>
        <begin position="148"/>
        <end position="151"/>
    </location>
    <ligand>
        <name>GTP</name>
        <dbReference type="ChEBI" id="CHEBI:37565"/>
    </ligand>
</feature>
<feature type="binding site" evidence="1">
    <location>
        <begin position="180"/>
        <end position="182"/>
    </location>
    <ligand>
        <name>GTP</name>
        <dbReference type="ChEBI" id="CHEBI:37565"/>
    </ligand>
</feature>
<protein>
    <recommendedName>
        <fullName evidence="1">Probable GTP-binding protein EngB</fullName>
    </recommendedName>
</protein>
<name>ENGB_STRPZ</name>